<reference key="1">
    <citation type="submission" date="2002-02" db="EMBL/GenBank/DDBJ databases">
        <title>Nucleotide sequence of a cDNA encoding a D-type cyclin from cell suspension culture of rice.</title>
        <authorList>
            <person name="Nakashima M."/>
            <person name="Neogi P.B."/>
            <person name="Okano E."/>
            <person name="Hashimoto J."/>
            <person name="Sasaki T."/>
            <person name="Ichikawa H."/>
        </authorList>
    </citation>
    <scope>NUCLEOTIDE SEQUENCE [MRNA]</scope>
    <source>
        <strain>cv. Nipponbare</strain>
    </source>
</reference>
<reference key="2">
    <citation type="journal article" date="2005" name="Nature">
        <title>The map-based sequence of the rice genome.</title>
        <authorList>
            <consortium name="International rice genome sequencing project (IRGSP)"/>
        </authorList>
    </citation>
    <scope>NUCLEOTIDE SEQUENCE [LARGE SCALE GENOMIC DNA]</scope>
    <source>
        <strain>cv. Nipponbare</strain>
    </source>
</reference>
<reference key="3">
    <citation type="journal article" date="2008" name="Nucleic Acids Res.">
        <title>The rice annotation project database (RAP-DB): 2008 update.</title>
        <authorList>
            <consortium name="The rice annotation project (RAP)"/>
        </authorList>
    </citation>
    <scope>GENOME REANNOTATION</scope>
    <source>
        <strain>cv. Nipponbare</strain>
    </source>
</reference>
<reference key="4">
    <citation type="journal article" date="2013" name="Rice">
        <title>Improvement of the Oryza sativa Nipponbare reference genome using next generation sequence and optical map data.</title>
        <authorList>
            <person name="Kawahara Y."/>
            <person name="de la Bastide M."/>
            <person name="Hamilton J.P."/>
            <person name="Kanamori H."/>
            <person name="McCombie W.R."/>
            <person name="Ouyang S."/>
            <person name="Schwartz D.C."/>
            <person name="Tanaka T."/>
            <person name="Wu J."/>
            <person name="Zhou S."/>
            <person name="Childs K.L."/>
            <person name="Davidson R.M."/>
            <person name="Lin H."/>
            <person name="Quesada-Ocampo L."/>
            <person name="Vaillancourt B."/>
            <person name="Sakai H."/>
            <person name="Lee S.S."/>
            <person name="Kim J."/>
            <person name="Numa H."/>
            <person name="Itoh T."/>
            <person name="Buell C.R."/>
            <person name="Matsumoto T."/>
        </authorList>
    </citation>
    <scope>GENOME REANNOTATION</scope>
    <source>
        <strain>cv. Nipponbare</strain>
    </source>
</reference>
<reference key="5">
    <citation type="journal article" date="2005" name="PLoS Biol.">
        <title>The genomes of Oryza sativa: a history of duplications.</title>
        <authorList>
            <person name="Yu J."/>
            <person name="Wang J."/>
            <person name="Lin W."/>
            <person name="Li S."/>
            <person name="Li H."/>
            <person name="Zhou J."/>
            <person name="Ni P."/>
            <person name="Dong W."/>
            <person name="Hu S."/>
            <person name="Zeng C."/>
            <person name="Zhang J."/>
            <person name="Zhang Y."/>
            <person name="Li R."/>
            <person name="Xu Z."/>
            <person name="Li S."/>
            <person name="Li X."/>
            <person name="Zheng H."/>
            <person name="Cong L."/>
            <person name="Lin L."/>
            <person name="Yin J."/>
            <person name="Geng J."/>
            <person name="Li G."/>
            <person name="Shi J."/>
            <person name="Liu J."/>
            <person name="Lv H."/>
            <person name="Li J."/>
            <person name="Wang J."/>
            <person name="Deng Y."/>
            <person name="Ran L."/>
            <person name="Shi X."/>
            <person name="Wang X."/>
            <person name="Wu Q."/>
            <person name="Li C."/>
            <person name="Ren X."/>
            <person name="Wang J."/>
            <person name="Wang X."/>
            <person name="Li D."/>
            <person name="Liu D."/>
            <person name="Zhang X."/>
            <person name="Ji Z."/>
            <person name="Zhao W."/>
            <person name="Sun Y."/>
            <person name="Zhang Z."/>
            <person name="Bao J."/>
            <person name="Han Y."/>
            <person name="Dong L."/>
            <person name="Ji J."/>
            <person name="Chen P."/>
            <person name="Wu S."/>
            <person name="Liu J."/>
            <person name="Xiao Y."/>
            <person name="Bu D."/>
            <person name="Tan J."/>
            <person name="Yang L."/>
            <person name="Ye C."/>
            <person name="Zhang J."/>
            <person name="Xu J."/>
            <person name="Zhou Y."/>
            <person name="Yu Y."/>
            <person name="Zhang B."/>
            <person name="Zhuang S."/>
            <person name="Wei H."/>
            <person name="Liu B."/>
            <person name="Lei M."/>
            <person name="Yu H."/>
            <person name="Li Y."/>
            <person name="Xu H."/>
            <person name="Wei S."/>
            <person name="He X."/>
            <person name="Fang L."/>
            <person name="Zhang Z."/>
            <person name="Zhang Y."/>
            <person name="Huang X."/>
            <person name="Su Z."/>
            <person name="Tong W."/>
            <person name="Li J."/>
            <person name="Tong Z."/>
            <person name="Li S."/>
            <person name="Ye J."/>
            <person name="Wang L."/>
            <person name="Fang L."/>
            <person name="Lei T."/>
            <person name="Chen C.-S."/>
            <person name="Chen H.-C."/>
            <person name="Xu Z."/>
            <person name="Li H."/>
            <person name="Huang H."/>
            <person name="Zhang F."/>
            <person name="Xu H."/>
            <person name="Li N."/>
            <person name="Zhao C."/>
            <person name="Li S."/>
            <person name="Dong L."/>
            <person name="Huang Y."/>
            <person name="Li L."/>
            <person name="Xi Y."/>
            <person name="Qi Q."/>
            <person name="Li W."/>
            <person name="Zhang B."/>
            <person name="Hu W."/>
            <person name="Zhang Y."/>
            <person name="Tian X."/>
            <person name="Jiao Y."/>
            <person name="Liang X."/>
            <person name="Jin J."/>
            <person name="Gao L."/>
            <person name="Zheng W."/>
            <person name="Hao B."/>
            <person name="Liu S.-M."/>
            <person name="Wang W."/>
            <person name="Yuan L."/>
            <person name="Cao M."/>
            <person name="McDermott J."/>
            <person name="Samudrala R."/>
            <person name="Wang J."/>
            <person name="Wong G.K.-S."/>
            <person name="Yang H."/>
        </authorList>
    </citation>
    <scope>NUCLEOTIDE SEQUENCE [LARGE SCALE GENOMIC DNA]</scope>
    <source>
        <strain>cv. Nipponbare</strain>
    </source>
</reference>
<reference key="6">
    <citation type="journal article" date="2003" name="Science">
        <title>Collection, mapping, and annotation of over 28,000 cDNA clones from japonica rice.</title>
        <authorList>
            <consortium name="The rice full-length cDNA consortium"/>
        </authorList>
    </citation>
    <scope>NUCLEOTIDE SEQUENCE [LARGE SCALE MRNA]</scope>
    <source>
        <strain>cv. Nipponbare</strain>
    </source>
</reference>
<reference key="7">
    <citation type="journal article" date="2006" name="Mol. Genet. Genomics">
        <title>Genome-wide analysis of cyclin family in rice (Oryza sativa L.).</title>
        <authorList>
            <person name="La H."/>
            <person name="Li J."/>
            <person name="Ji Z."/>
            <person name="Cheng Y."/>
            <person name="Li X."/>
            <person name="Jiang S."/>
            <person name="Venkatesh P.N."/>
            <person name="Ramachandran S."/>
        </authorList>
    </citation>
    <scope>GENE FAMILY</scope>
    <scope>NOMENCLATURE</scope>
</reference>
<sequence length="356" mass="38937">MAALTSYEMAASILLCAEDSSSVLGFGGEEEEEEEDVVAGKRARCAGPPPPPCVDVAGVDFAVPSEECVARLVETEADHMPREDYAERLRAGGGDGDLDLRVRMDAIDWIWKVHSYYSFAPLTACLAVNYLDRFLSLYQLPDGKDWMTQLLAVACLSLAAKMEETDVPQSLDLQVGEERYVFEAKTIQRMELLVLSTLKWRMQAVTPFSYVDYFLRELNGGDPPSGRSALLSSELILCIARGTECLGFRPSEIAAAVAAAVVGEEHAAFSHVNKERMSHCQEVIQAMELIHPKPSSPSRVFVSSSIPRSPTGVLDAAGCLSYRSDDSAVASHYAASSWGYEHDSSPVSSKRRKISR</sequence>
<feature type="chain" id="PRO_0000287031" description="Cyclin-D4-1">
    <location>
        <begin position="1"/>
        <end position="356"/>
    </location>
</feature>
<feature type="sequence conflict" description="In Ref. 5; EAZ45038." evidence="1" ref="5">
    <original>RA</original>
    <variation>IP</variation>
    <location>
        <begin position="42"/>
        <end position="43"/>
    </location>
</feature>
<accession>Q6YXH8</accession>
<accession>A3BZP9</accession>
<accession>B7E976</accession>
<accession>Q8SBC0</accession>
<dbReference type="EMBL" id="AB080248">
    <property type="protein sequence ID" value="BAB85522.1"/>
    <property type="molecule type" value="mRNA"/>
</dbReference>
<dbReference type="EMBL" id="AP005676">
    <property type="protein sequence ID" value="BAD17511.1"/>
    <property type="molecule type" value="Genomic_DNA"/>
</dbReference>
<dbReference type="EMBL" id="AP005676">
    <property type="protein sequence ID" value="BAD17512.1"/>
    <property type="status" value="ALT_SEQ"/>
    <property type="molecule type" value="Genomic_DNA"/>
</dbReference>
<dbReference type="EMBL" id="AP008215">
    <property type="protein sequence ID" value="BAF25331.1"/>
    <property type="molecule type" value="Genomic_DNA"/>
</dbReference>
<dbReference type="EMBL" id="AP014965">
    <property type="protein sequence ID" value="BAT08517.1"/>
    <property type="molecule type" value="Genomic_DNA"/>
</dbReference>
<dbReference type="EMBL" id="CM000146">
    <property type="protein sequence ID" value="EAZ45038.1"/>
    <property type="molecule type" value="Genomic_DNA"/>
</dbReference>
<dbReference type="EMBL" id="AK063940">
    <property type="protein sequence ID" value="BAG88923.1"/>
    <property type="molecule type" value="mRNA"/>
</dbReference>
<dbReference type="RefSeq" id="XP_015610698.1">
    <property type="nucleotide sequence ID" value="XM_015755212.1"/>
</dbReference>
<dbReference type="SMR" id="Q6YXH8"/>
<dbReference type="FunCoup" id="Q6YXH8">
    <property type="interactions" value="320"/>
</dbReference>
<dbReference type="STRING" id="39947.Q6YXH8"/>
<dbReference type="PaxDb" id="39947-Q6YXH8"/>
<dbReference type="EnsemblPlants" id="Os09t0466100-01">
    <property type="protein sequence ID" value="Os09t0466100-01"/>
    <property type="gene ID" value="Os09g0466100"/>
</dbReference>
<dbReference type="Gramene" id="Os09t0466100-01">
    <property type="protein sequence ID" value="Os09t0466100-01"/>
    <property type="gene ID" value="Os09g0466100"/>
</dbReference>
<dbReference type="KEGG" id="dosa:Os09g0466100"/>
<dbReference type="eggNOG" id="KOG0656">
    <property type="taxonomic scope" value="Eukaryota"/>
</dbReference>
<dbReference type="HOGENOM" id="CLU_048040_1_1_1"/>
<dbReference type="InParanoid" id="Q6YXH8"/>
<dbReference type="OMA" id="NFGPMCA"/>
<dbReference type="OrthoDB" id="5590282at2759"/>
<dbReference type="PlantReactome" id="R-OSA-9640760">
    <property type="pathway name" value="G1 phase"/>
</dbReference>
<dbReference type="PlantReactome" id="R-OSA-9640887">
    <property type="pathway name" value="G1/S transition"/>
</dbReference>
<dbReference type="Proteomes" id="UP000000763">
    <property type="component" value="Chromosome 9"/>
</dbReference>
<dbReference type="Proteomes" id="UP000007752">
    <property type="component" value="Chromosome 9"/>
</dbReference>
<dbReference type="Proteomes" id="UP000059680">
    <property type="component" value="Chromosome 9"/>
</dbReference>
<dbReference type="ExpressionAtlas" id="Q6YXH8">
    <property type="expression patterns" value="baseline and differential"/>
</dbReference>
<dbReference type="GO" id="GO:0000307">
    <property type="term" value="C:cyclin-dependent protein kinase holoenzyme complex"/>
    <property type="evidence" value="ECO:0000318"/>
    <property type="project" value="GO_Central"/>
</dbReference>
<dbReference type="GO" id="GO:0005737">
    <property type="term" value="C:cytoplasm"/>
    <property type="evidence" value="ECO:0000318"/>
    <property type="project" value="GO_Central"/>
</dbReference>
<dbReference type="GO" id="GO:0005634">
    <property type="term" value="C:nucleus"/>
    <property type="evidence" value="ECO:0000318"/>
    <property type="project" value="GO_Central"/>
</dbReference>
<dbReference type="GO" id="GO:0016538">
    <property type="term" value="F:cyclin-dependent protein serine/threonine kinase regulator activity"/>
    <property type="evidence" value="ECO:0000318"/>
    <property type="project" value="GO_Central"/>
</dbReference>
<dbReference type="GO" id="GO:0051301">
    <property type="term" value="P:cell division"/>
    <property type="evidence" value="ECO:0007669"/>
    <property type="project" value="UniProtKB-KW"/>
</dbReference>
<dbReference type="GO" id="GO:0000082">
    <property type="term" value="P:G1/S transition of mitotic cell cycle"/>
    <property type="evidence" value="ECO:0000318"/>
    <property type="project" value="GO_Central"/>
</dbReference>
<dbReference type="CDD" id="cd20543">
    <property type="entry name" value="CYCLIN_AtCycD-like_rpt1"/>
    <property type="match status" value="1"/>
</dbReference>
<dbReference type="FunFam" id="1.10.472.10:FF:000034">
    <property type="entry name" value="D2/4-type cyclin"/>
    <property type="match status" value="1"/>
</dbReference>
<dbReference type="FunFam" id="1.10.472.10:FF:000040">
    <property type="entry name" value="D6-type cyclin"/>
    <property type="match status" value="1"/>
</dbReference>
<dbReference type="Gene3D" id="1.10.472.10">
    <property type="entry name" value="Cyclin-like"/>
    <property type="match status" value="2"/>
</dbReference>
<dbReference type="InterPro" id="IPR039361">
    <property type="entry name" value="Cyclin"/>
</dbReference>
<dbReference type="InterPro" id="IPR013763">
    <property type="entry name" value="Cyclin-like_dom"/>
</dbReference>
<dbReference type="InterPro" id="IPR036915">
    <property type="entry name" value="Cyclin-like_sf"/>
</dbReference>
<dbReference type="InterPro" id="IPR004367">
    <property type="entry name" value="Cyclin_C-dom"/>
</dbReference>
<dbReference type="InterPro" id="IPR006671">
    <property type="entry name" value="Cyclin_N"/>
</dbReference>
<dbReference type="InterPro" id="IPR048258">
    <property type="entry name" value="Cyclins_cyclin-box"/>
</dbReference>
<dbReference type="PANTHER" id="PTHR10177">
    <property type="entry name" value="CYCLINS"/>
    <property type="match status" value="1"/>
</dbReference>
<dbReference type="Pfam" id="PF00134">
    <property type="entry name" value="Cyclin_N"/>
    <property type="match status" value="1"/>
</dbReference>
<dbReference type="SMART" id="SM00385">
    <property type="entry name" value="CYCLIN"/>
    <property type="match status" value="1"/>
</dbReference>
<dbReference type="SMART" id="SM01332">
    <property type="entry name" value="Cyclin_C"/>
    <property type="match status" value="1"/>
</dbReference>
<dbReference type="SUPFAM" id="SSF47954">
    <property type="entry name" value="Cyclin-like"/>
    <property type="match status" value="2"/>
</dbReference>
<dbReference type="PROSITE" id="PS00292">
    <property type="entry name" value="CYCLINS"/>
    <property type="match status" value="1"/>
</dbReference>
<gene>
    <name type="primary">CYCD4-1</name>
    <name type="synonym">OSCYCD</name>
    <name type="ordered locus">Os09g0466100</name>
    <name type="ordered locus">LOC_Os09g29100</name>
    <name type="ORF">OJ1005_D12.23-1</name>
    <name type="ORF">OJ1005_D12.23-2</name>
    <name type="ORF">OsJ_028521</name>
</gene>
<proteinExistence type="evidence at transcript level"/>
<protein>
    <recommendedName>
        <fullName>Cyclin-D4-1</fullName>
    </recommendedName>
    <alternativeName>
        <fullName>G1/S-specific cyclin-D4-1</fullName>
        <shortName>CycD4;1</shortName>
    </alternativeName>
</protein>
<keyword id="KW-0131">Cell cycle</keyword>
<keyword id="KW-0132">Cell division</keyword>
<keyword id="KW-0195">Cyclin</keyword>
<keyword id="KW-1185">Reference proteome</keyword>
<name>CCD41_ORYSJ</name>
<comment type="similarity">
    <text evidence="1">Belongs to the cyclin family. Cyclin D subfamily.</text>
</comment>
<comment type="sequence caution" evidence="1">
    <conflict type="erroneous gene model prediction">
        <sequence resource="EMBL-CDS" id="BAD17512"/>
    </conflict>
</comment>
<organism>
    <name type="scientific">Oryza sativa subsp. japonica</name>
    <name type="common">Rice</name>
    <dbReference type="NCBI Taxonomy" id="39947"/>
    <lineage>
        <taxon>Eukaryota</taxon>
        <taxon>Viridiplantae</taxon>
        <taxon>Streptophyta</taxon>
        <taxon>Embryophyta</taxon>
        <taxon>Tracheophyta</taxon>
        <taxon>Spermatophyta</taxon>
        <taxon>Magnoliopsida</taxon>
        <taxon>Liliopsida</taxon>
        <taxon>Poales</taxon>
        <taxon>Poaceae</taxon>
        <taxon>BOP clade</taxon>
        <taxon>Oryzoideae</taxon>
        <taxon>Oryzeae</taxon>
        <taxon>Oryzinae</taxon>
        <taxon>Oryza</taxon>
        <taxon>Oryza sativa</taxon>
    </lineage>
</organism>
<evidence type="ECO:0000305" key="1"/>